<comment type="subcellular location">
    <subcellularLocation>
        <location evidence="2">Cell inner membrane</location>
        <topology evidence="2">Multi-pass membrane protein</topology>
    </subcellularLocation>
</comment>
<comment type="similarity">
    <text evidence="2">Belongs to the major facilitator superfamily.</text>
</comment>
<proteinExistence type="inferred from homology"/>
<evidence type="ECO:0000255" key="1"/>
<evidence type="ECO:0000305" key="2"/>
<accession>Q8X4V6</accession>
<sequence>MTKPNHELSPALIVLMSIATGLAVASNYYAQPLLDTIARNFSLSASSAGFIVTAAQLGYAAGLLFLVPLGDMFERRRLIVSMTLLAAGGMLITASSQSLAMMILGTALTGLFSVVAQILVPLAATLASPDKRGKVVGTIMSGLLLGILLARTVAGLLANLGGWRTVFWVASVLMALMALALWRGLPQMKSETHLNYPQLLGSVFSMFISNKILRTRALLGCLTFANFSILWTSMAFLLAAPPFNYSDGVIGLFGLAGAAGALGARPAGGFADKGKSHHTTTFGLLLLLLSWLAIWFGHTSVLALIIGILVLDLTVQGVHITNQTVIYRIHPDARNRLTAGYMTSYFIGGAAGSLISASAWQHGGWAGVCLAGATIALVNLLVWWRGFHRQEAAN</sequence>
<gene>
    <name type="primary">ygaY</name>
    <name type="ordered locus">Z3982</name>
    <name type="ordered locus">ECs3543</name>
</gene>
<keyword id="KW-0997">Cell inner membrane</keyword>
<keyword id="KW-1003">Cell membrane</keyword>
<keyword id="KW-0472">Membrane</keyword>
<keyword id="KW-1185">Reference proteome</keyword>
<keyword id="KW-0812">Transmembrane</keyword>
<keyword id="KW-1133">Transmembrane helix</keyword>
<keyword id="KW-0813">Transport</keyword>
<organism>
    <name type="scientific">Escherichia coli O157:H7</name>
    <dbReference type="NCBI Taxonomy" id="83334"/>
    <lineage>
        <taxon>Bacteria</taxon>
        <taxon>Pseudomonadati</taxon>
        <taxon>Pseudomonadota</taxon>
        <taxon>Gammaproteobacteria</taxon>
        <taxon>Enterobacterales</taxon>
        <taxon>Enterobacteriaceae</taxon>
        <taxon>Escherichia</taxon>
    </lineage>
</organism>
<name>YGAY_ECO57</name>
<protein>
    <recommendedName>
        <fullName>Uncharacterized transporter YgaY</fullName>
    </recommendedName>
</protein>
<reference key="1">
    <citation type="journal article" date="2001" name="Nature">
        <title>Genome sequence of enterohaemorrhagic Escherichia coli O157:H7.</title>
        <authorList>
            <person name="Perna N.T."/>
            <person name="Plunkett G. III"/>
            <person name="Burland V."/>
            <person name="Mau B."/>
            <person name="Glasner J.D."/>
            <person name="Rose D.J."/>
            <person name="Mayhew G.F."/>
            <person name="Evans P.S."/>
            <person name="Gregor J."/>
            <person name="Kirkpatrick H.A."/>
            <person name="Posfai G."/>
            <person name="Hackett J."/>
            <person name="Klink S."/>
            <person name="Boutin A."/>
            <person name="Shao Y."/>
            <person name="Miller L."/>
            <person name="Grotbeck E.J."/>
            <person name="Davis N.W."/>
            <person name="Lim A."/>
            <person name="Dimalanta E.T."/>
            <person name="Potamousis K."/>
            <person name="Apodaca J."/>
            <person name="Anantharaman T.S."/>
            <person name="Lin J."/>
            <person name="Yen G."/>
            <person name="Schwartz D.C."/>
            <person name="Welch R.A."/>
            <person name="Blattner F.R."/>
        </authorList>
    </citation>
    <scope>NUCLEOTIDE SEQUENCE [LARGE SCALE GENOMIC DNA]</scope>
    <source>
        <strain>O157:H7 / EDL933 / ATCC 700927 / EHEC</strain>
    </source>
</reference>
<reference key="2">
    <citation type="journal article" date="2001" name="DNA Res.">
        <title>Complete genome sequence of enterohemorrhagic Escherichia coli O157:H7 and genomic comparison with a laboratory strain K-12.</title>
        <authorList>
            <person name="Hayashi T."/>
            <person name="Makino K."/>
            <person name="Ohnishi M."/>
            <person name="Kurokawa K."/>
            <person name="Ishii K."/>
            <person name="Yokoyama K."/>
            <person name="Han C.-G."/>
            <person name="Ohtsubo E."/>
            <person name="Nakayama K."/>
            <person name="Murata T."/>
            <person name="Tanaka M."/>
            <person name="Tobe T."/>
            <person name="Iida T."/>
            <person name="Takami H."/>
            <person name="Honda T."/>
            <person name="Sasakawa C."/>
            <person name="Ogasawara N."/>
            <person name="Yasunaga T."/>
            <person name="Kuhara S."/>
            <person name="Shiba T."/>
            <person name="Hattori M."/>
            <person name="Shinagawa H."/>
        </authorList>
    </citation>
    <scope>NUCLEOTIDE SEQUENCE [LARGE SCALE GENOMIC DNA]</scope>
    <source>
        <strain>O157:H7 / Sakai / RIMD 0509952 / EHEC</strain>
    </source>
</reference>
<dbReference type="EMBL" id="AE005174">
    <property type="protein sequence ID" value="AAG57790.1"/>
    <property type="molecule type" value="Genomic_DNA"/>
</dbReference>
<dbReference type="EMBL" id="BA000007">
    <property type="protein sequence ID" value="BAB36966.1"/>
    <property type="molecule type" value="Genomic_DNA"/>
</dbReference>
<dbReference type="PIR" id="B85916">
    <property type="entry name" value="B85916"/>
</dbReference>
<dbReference type="PIR" id="G91071">
    <property type="entry name" value="G91071"/>
</dbReference>
<dbReference type="RefSeq" id="NP_311570.1">
    <property type="nucleotide sequence ID" value="NC_002695.1"/>
</dbReference>
<dbReference type="RefSeq" id="WP_000165714.1">
    <property type="nucleotide sequence ID" value="NZ_VOAI01000003.1"/>
</dbReference>
<dbReference type="SMR" id="Q8X4V6"/>
<dbReference type="STRING" id="155864.Z3982"/>
<dbReference type="GeneID" id="914741"/>
<dbReference type="KEGG" id="ece:Z3982"/>
<dbReference type="KEGG" id="ecs:ECs_3543"/>
<dbReference type="PATRIC" id="fig|386585.9.peg.3698"/>
<dbReference type="eggNOG" id="COG2814">
    <property type="taxonomic scope" value="Bacteria"/>
</dbReference>
<dbReference type="HOGENOM" id="CLU_001265_23_0_6"/>
<dbReference type="OMA" id="FWTPLAF"/>
<dbReference type="Proteomes" id="UP000000558">
    <property type="component" value="Chromosome"/>
</dbReference>
<dbReference type="Proteomes" id="UP000002519">
    <property type="component" value="Chromosome"/>
</dbReference>
<dbReference type="GO" id="GO:0005886">
    <property type="term" value="C:plasma membrane"/>
    <property type="evidence" value="ECO:0007669"/>
    <property type="project" value="UniProtKB-SubCell"/>
</dbReference>
<dbReference type="GO" id="GO:0022857">
    <property type="term" value="F:transmembrane transporter activity"/>
    <property type="evidence" value="ECO:0007669"/>
    <property type="project" value="InterPro"/>
</dbReference>
<dbReference type="CDD" id="cd17324">
    <property type="entry name" value="MFS_NepI_like"/>
    <property type="match status" value="1"/>
</dbReference>
<dbReference type="Gene3D" id="1.20.1250.20">
    <property type="entry name" value="MFS general substrate transporter like domains"/>
    <property type="match status" value="1"/>
</dbReference>
<dbReference type="InterPro" id="IPR011701">
    <property type="entry name" value="MFS"/>
</dbReference>
<dbReference type="InterPro" id="IPR020846">
    <property type="entry name" value="MFS_dom"/>
</dbReference>
<dbReference type="InterPro" id="IPR036259">
    <property type="entry name" value="MFS_trans_sf"/>
</dbReference>
<dbReference type="PANTHER" id="PTHR42910:SF1">
    <property type="entry name" value="MAJOR FACILITATOR SUPERFAMILY (MFS) PROFILE DOMAIN-CONTAINING PROTEIN"/>
    <property type="match status" value="1"/>
</dbReference>
<dbReference type="PANTHER" id="PTHR42910">
    <property type="entry name" value="TRANSPORTER SCO4007-RELATED"/>
    <property type="match status" value="1"/>
</dbReference>
<dbReference type="Pfam" id="PF07690">
    <property type="entry name" value="MFS_1"/>
    <property type="match status" value="1"/>
</dbReference>
<dbReference type="SUPFAM" id="SSF103473">
    <property type="entry name" value="MFS general substrate transporter"/>
    <property type="match status" value="1"/>
</dbReference>
<dbReference type="PROSITE" id="PS50850">
    <property type="entry name" value="MFS"/>
    <property type="match status" value="1"/>
</dbReference>
<feature type="chain" id="PRO_0000173408" description="Uncharacterized transporter YgaY">
    <location>
        <begin position="1"/>
        <end position="394"/>
    </location>
</feature>
<feature type="transmembrane region" description="Helical" evidence="1">
    <location>
        <begin position="10"/>
        <end position="30"/>
    </location>
</feature>
<feature type="transmembrane region" description="Helical" evidence="1">
    <location>
        <begin position="50"/>
        <end position="70"/>
    </location>
</feature>
<feature type="transmembrane region" description="Helical" evidence="1">
    <location>
        <begin position="79"/>
        <end position="99"/>
    </location>
</feature>
<feature type="transmembrane region" description="Helical" evidence="1">
    <location>
        <begin position="100"/>
        <end position="120"/>
    </location>
</feature>
<feature type="transmembrane region" description="Helical" evidence="1">
    <location>
        <begin position="138"/>
        <end position="158"/>
    </location>
</feature>
<feature type="transmembrane region" description="Helical" evidence="1">
    <location>
        <begin position="166"/>
        <end position="186"/>
    </location>
</feature>
<feature type="transmembrane region" description="Helical" evidence="1">
    <location>
        <begin position="218"/>
        <end position="238"/>
    </location>
</feature>
<feature type="transmembrane region" description="Helical" evidence="1">
    <location>
        <begin position="243"/>
        <end position="263"/>
    </location>
</feature>
<feature type="transmembrane region" description="Helical" evidence="1">
    <location>
        <begin position="291"/>
        <end position="311"/>
    </location>
</feature>
<feature type="transmembrane region" description="Helical" evidence="1">
    <location>
        <begin position="337"/>
        <end position="357"/>
    </location>
</feature>
<feature type="transmembrane region" description="Helical" evidence="1">
    <location>
        <begin position="364"/>
        <end position="384"/>
    </location>
</feature>